<name>PTFB1_ECOL6</name>
<organism>
    <name type="scientific">Escherichia coli O6:H1 (strain CFT073 / ATCC 700928 / UPEC)</name>
    <dbReference type="NCBI Taxonomy" id="199310"/>
    <lineage>
        <taxon>Bacteria</taxon>
        <taxon>Pseudomonadati</taxon>
        <taxon>Pseudomonadota</taxon>
        <taxon>Gammaproteobacteria</taxon>
        <taxon>Enterobacterales</taxon>
        <taxon>Enterobacteriaceae</taxon>
        <taxon>Escherichia</taxon>
    </lineage>
</organism>
<gene>
    <name type="primary">fryB</name>
    <name type="ordered locus">c2926</name>
</gene>
<sequence length="108" mass="11735">MSKKLIALCACPMGLAHTFMAAQALEEAAVEAGYEVKIETQGADGIQNRLTAQDIAEATIIIHSVAVTPEDNERFESRDVYEITLQDAIKNAAGIIKEIEEMIASEQQ</sequence>
<reference key="1">
    <citation type="journal article" date="2002" name="Proc. Natl. Acad. Sci. U.S.A.">
        <title>Extensive mosaic structure revealed by the complete genome sequence of uropathogenic Escherichia coli.</title>
        <authorList>
            <person name="Welch R.A."/>
            <person name="Burland V."/>
            <person name="Plunkett G. III"/>
            <person name="Redford P."/>
            <person name="Roesch P."/>
            <person name="Rasko D."/>
            <person name="Buckles E.L."/>
            <person name="Liou S.-R."/>
            <person name="Boutin A."/>
            <person name="Hackett J."/>
            <person name="Stroud D."/>
            <person name="Mayhew G.F."/>
            <person name="Rose D.J."/>
            <person name="Zhou S."/>
            <person name="Schwartz D.C."/>
            <person name="Perna N.T."/>
            <person name="Mobley H.L.T."/>
            <person name="Donnenberg M.S."/>
            <person name="Blattner F.R."/>
        </authorList>
    </citation>
    <scope>NUCLEOTIDE SEQUENCE [LARGE SCALE GENOMIC DNA]</scope>
    <source>
        <strain>CFT073 / ATCC 700928 / UPEC</strain>
    </source>
</reference>
<keyword id="KW-0963">Cytoplasm</keyword>
<keyword id="KW-0418">Kinase</keyword>
<keyword id="KW-0597">Phosphoprotein</keyword>
<keyword id="KW-0598">Phosphotransferase system</keyword>
<keyword id="KW-1185">Reference proteome</keyword>
<keyword id="KW-0762">Sugar transport</keyword>
<keyword id="KW-0808">Transferase</keyword>
<keyword id="KW-0813">Transport</keyword>
<comment type="function">
    <text evidence="1">The phosphoenolpyruvate-dependent sugar phosphotransferase system (sugar PTS), a major carbohydrate active transport system, catalyzes the phosphorylation of incoming sugar substrates concomitantly with their translocation across the cell membrane. The enzyme II FryABC PTS system is involved in fructose transport.</text>
</comment>
<comment type="catalytic activity">
    <reaction evidence="1">
        <text>D-fructose(out) + N(pros)-phospho-L-histidyl-[protein] = D-fructose 1-phosphate(in) + L-histidyl-[protein]</text>
        <dbReference type="Rhea" id="RHEA:49252"/>
        <dbReference type="Rhea" id="RHEA-COMP:9745"/>
        <dbReference type="Rhea" id="RHEA-COMP:9746"/>
        <dbReference type="ChEBI" id="CHEBI:29979"/>
        <dbReference type="ChEBI" id="CHEBI:37721"/>
        <dbReference type="ChEBI" id="CHEBI:58674"/>
        <dbReference type="ChEBI" id="CHEBI:64837"/>
        <dbReference type="EC" id="2.7.1.202"/>
    </reaction>
</comment>
<comment type="subcellular location">
    <subcellularLocation>
        <location evidence="3">Cytoplasm</location>
    </subcellularLocation>
</comment>
<comment type="domain">
    <text evidence="2">The PTS EIIB type-2 domain is phosphorylated by phospho-EIIA on a cysteinyl residue. Then, it transfers the phosphoryl group to the sugar substrate concomitantly with the sugar uptake processed by the PTS EIIC type-2 domain.</text>
</comment>
<comment type="sequence caution" evidence="3">
    <conflict type="erroneous initiation">
        <sequence resource="EMBL-CDS" id="AAN81376"/>
    </conflict>
    <text>Extended N-terminus.</text>
</comment>
<evidence type="ECO:0000250" key="1">
    <source>
        <dbReference type="UniProtKB" id="P20966"/>
    </source>
</evidence>
<evidence type="ECO:0000255" key="2">
    <source>
        <dbReference type="PROSITE-ProRule" id="PRU00422"/>
    </source>
</evidence>
<evidence type="ECO:0000305" key="3"/>
<accession>P69809</accession>
<accession>P76525</accession>
<accession>P78264</accession>
<feature type="chain" id="PRO_0000186701" description="PTS system fructose-like EIIB component 1">
    <location>
        <begin position="1"/>
        <end position="108"/>
    </location>
</feature>
<feature type="domain" description="PTS EIIB type-2" evidence="2">
    <location>
        <begin position="1"/>
        <end position="104"/>
    </location>
</feature>
<feature type="active site" description="Phosphocysteine intermediate" evidence="1 3">
    <location>
        <position position="11"/>
    </location>
</feature>
<feature type="modified residue" description="Phosphocysteine; by EIIA" evidence="2">
    <location>
        <position position="11"/>
    </location>
</feature>
<protein>
    <recommendedName>
        <fullName evidence="1">PTS system fructose-like EIIB component 1</fullName>
        <ecNumber evidence="1">2.7.1.202</ecNumber>
    </recommendedName>
    <alternativeName>
        <fullName evidence="1">Fructose-like phosphotransferase enzyme IIB component 1</fullName>
    </alternativeName>
</protein>
<proteinExistence type="inferred from homology"/>
<dbReference type="EC" id="2.7.1.202" evidence="1"/>
<dbReference type="EMBL" id="AE014075">
    <property type="protein sequence ID" value="AAN81376.1"/>
    <property type="status" value="ALT_INIT"/>
    <property type="molecule type" value="Genomic_DNA"/>
</dbReference>
<dbReference type="RefSeq" id="WP_000038456.1">
    <property type="nucleotide sequence ID" value="NZ_CP051263.1"/>
</dbReference>
<dbReference type="BMRB" id="P69809"/>
<dbReference type="SMR" id="P69809"/>
<dbReference type="STRING" id="199310.c2926"/>
<dbReference type="KEGG" id="ecc:c2926"/>
<dbReference type="eggNOG" id="COG1445">
    <property type="taxonomic scope" value="Bacteria"/>
</dbReference>
<dbReference type="HOGENOM" id="CLU_013155_2_1_6"/>
<dbReference type="Proteomes" id="UP000001410">
    <property type="component" value="Chromosome"/>
</dbReference>
<dbReference type="GO" id="GO:0005737">
    <property type="term" value="C:cytoplasm"/>
    <property type="evidence" value="ECO:0007669"/>
    <property type="project" value="UniProtKB-SubCell"/>
</dbReference>
<dbReference type="GO" id="GO:0005886">
    <property type="term" value="C:plasma membrane"/>
    <property type="evidence" value="ECO:0007669"/>
    <property type="project" value="TreeGrafter"/>
</dbReference>
<dbReference type="GO" id="GO:0016301">
    <property type="term" value="F:kinase activity"/>
    <property type="evidence" value="ECO:0007669"/>
    <property type="project" value="UniProtKB-KW"/>
</dbReference>
<dbReference type="GO" id="GO:0022877">
    <property type="term" value="F:protein-N(PI)-phosphohistidine-fructose phosphotransferase system transporter activity"/>
    <property type="evidence" value="ECO:0007669"/>
    <property type="project" value="InterPro"/>
</dbReference>
<dbReference type="GO" id="GO:0090582">
    <property type="term" value="F:protein-phosphocysteine-D-fructose-phosphotransferase system transporter activity"/>
    <property type="evidence" value="ECO:0000250"/>
    <property type="project" value="UniProtKB"/>
</dbReference>
<dbReference type="GO" id="GO:0009401">
    <property type="term" value="P:phosphoenolpyruvate-dependent sugar phosphotransferase system"/>
    <property type="evidence" value="ECO:0000250"/>
    <property type="project" value="UniProtKB"/>
</dbReference>
<dbReference type="CDD" id="cd05569">
    <property type="entry name" value="PTS_IIB_fructose"/>
    <property type="match status" value="1"/>
</dbReference>
<dbReference type="FunFam" id="3.40.50.2300:FF:000092">
    <property type="entry name" value="Fructose-like phosphotransferase enzyme IIB component 1"/>
    <property type="match status" value="1"/>
</dbReference>
<dbReference type="Gene3D" id="3.40.50.2300">
    <property type="match status" value="1"/>
</dbReference>
<dbReference type="InterPro" id="IPR050864">
    <property type="entry name" value="Bacterial_PTS_Sugar_Transport"/>
</dbReference>
<dbReference type="InterPro" id="IPR036095">
    <property type="entry name" value="PTS_EIIB-like_sf"/>
</dbReference>
<dbReference type="InterPro" id="IPR013011">
    <property type="entry name" value="PTS_EIIB_2"/>
</dbReference>
<dbReference type="InterPro" id="IPR003501">
    <property type="entry name" value="PTS_EIIB_2/3"/>
</dbReference>
<dbReference type="InterPro" id="IPR003353">
    <property type="entry name" value="PTS_IIB_fruc"/>
</dbReference>
<dbReference type="NCBIfam" id="TIGR00829">
    <property type="entry name" value="FRU"/>
    <property type="match status" value="1"/>
</dbReference>
<dbReference type="PANTHER" id="PTHR30505">
    <property type="entry name" value="FRUCTOSE-LIKE PERMEASE"/>
    <property type="match status" value="1"/>
</dbReference>
<dbReference type="PANTHER" id="PTHR30505:SF0">
    <property type="entry name" value="FRUCTOSE-LIKE PTS SYSTEM EIIBC COMPONENT-RELATED"/>
    <property type="match status" value="1"/>
</dbReference>
<dbReference type="Pfam" id="PF02302">
    <property type="entry name" value="PTS_IIB"/>
    <property type="match status" value="1"/>
</dbReference>
<dbReference type="SUPFAM" id="SSF52794">
    <property type="entry name" value="PTS system IIB component-like"/>
    <property type="match status" value="1"/>
</dbReference>
<dbReference type="PROSITE" id="PS51099">
    <property type="entry name" value="PTS_EIIB_TYPE_2"/>
    <property type="match status" value="1"/>
</dbReference>